<proteinExistence type="inferred from homology"/>
<keyword id="KW-0030">Aminoacyl-tRNA synthetase</keyword>
<keyword id="KW-0067">ATP-binding</keyword>
<keyword id="KW-0963">Cytoplasm</keyword>
<keyword id="KW-0436">Ligase</keyword>
<keyword id="KW-0547">Nucleotide-binding</keyword>
<keyword id="KW-0648">Protein biosynthesis</keyword>
<evidence type="ECO:0000255" key="1">
    <source>
        <dbReference type="HAMAP-Rule" id="MF_00044"/>
    </source>
</evidence>
<sequence>MHRYRSHTCAALRKTDVGSNVRLSGWVHRVRDHGGILFIDLRDHYGITQIVADPDSPAFKVAETVRGEWVIRVDGEVKARADDAVNTNLPTGEVEIFATEIEVLSPAKELPLPVFGEPDYPEDIRLKYRFLDLRRETLHKNIMSRTKIIAAMRRRMTEIGFNEFSTPILTASSPEGARDFLVPSRIHPGKFYALPQAPQQYKQLLMVAGFDRYFQIAPCFRDEDPRADRLPGEFYQLDLEMSFVTQEEVWETMEPVMRGIFEEFAEGKPVTKVFRRIAYDDAIRTYGSDKPDLRNPIEMQAVTDHFAGSGFKVFANMIANDAKVEVWAIPAKTGGSRAFCDRMNSWAQSEGQPGLGYIFWRKEGDKLEGAGPIAKNIGEERTEAIRKQMGLEDGDACFFVAGLPSKFYKFAGDARTRAGEELNLVDRDRFELAWIIDFPFYEWDEDNKKIDFAHNPFSMPQGGMDALENMDPLEIKAYQYDLVCNGFEIASGSIRNQLPEVMVKAFEKVGLSQQDVEERFGGLYRAFQYGAPPHGGMAAGIDRVIMLLVGAKNLREISLFPMNQQALDLLMGAPSEVSPAQLRDLHVRLAPVQKS</sequence>
<organism>
    <name type="scientific">Brucella suis biovar 1 (strain 1330)</name>
    <dbReference type="NCBI Taxonomy" id="204722"/>
    <lineage>
        <taxon>Bacteria</taxon>
        <taxon>Pseudomonadati</taxon>
        <taxon>Pseudomonadota</taxon>
        <taxon>Alphaproteobacteria</taxon>
        <taxon>Hyphomicrobiales</taxon>
        <taxon>Brucellaceae</taxon>
        <taxon>Brucella/Ochrobactrum group</taxon>
        <taxon>Brucella</taxon>
    </lineage>
</organism>
<gene>
    <name evidence="1" type="primary">aspS</name>
    <name type="ordered locus">BR0751</name>
    <name type="ordered locus">BS1330_I0747</name>
</gene>
<accession>P67013</accession>
<accession>G0K8H0</accession>
<accession>Q8YGF7</accession>
<reference key="1">
    <citation type="journal article" date="2002" name="Proc. Natl. Acad. Sci. U.S.A.">
        <title>The Brucella suis genome reveals fundamental similarities between animal and plant pathogens and symbionts.</title>
        <authorList>
            <person name="Paulsen I.T."/>
            <person name="Seshadri R."/>
            <person name="Nelson K.E."/>
            <person name="Eisen J.A."/>
            <person name="Heidelberg J.F."/>
            <person name="Read T.D."/>
            <person name="Dodson R.J."/>
            <person name="Umayam L.A."/>
            <person name="Brinkac L.M."/>
            <person name="Beanan M.J."/>
            <person name="Daugherty S.C."/>
            <person name="DeBoy R.T."/>
            <person name="Durkin A.S."/>
            <person name="Kolonay J.F."/>
            <person name="Madupu R."/>
            <person name="Nelson W.C."/>
            <person name="Ayodeji B."/>
            <person name="Kraul M."/>
            <person name="Shetty J."/>
            <person name="Malek J.A."/>
            <person name="Van Aken S.E."/>
            <person name="Riedmuller S."/>
            <person name="Tettelin H."/>
            <person name="Gill S.R."/>
            <person name="White O."/>
            <person name="Salzberg S.L."/>
            <person name="Hoover D.L."/>
            <person name="Lindler L.E."/>
            <person name="Halling S.M."/>
            <person name="Boyle S.M."/>
            <person name="Fraser C.M."/>
        </authorList>
    </citation>
    <scope>NUCLEOTIDE SEQUENCE [LARGE SCALE GENOMIC DNA]</scope>
    <source>
        <strain>1330</strain>
    </source>
</reference>
<reference key="2">
    <citation type="journal article" date="2011" name="J. Bacteriol.">
        <title>Revised genome sequence of Brucella suis 1330.</title>
        <authorList>
            <person name="Tae H."/>
            <person name="Shallom S."/>
            <person name="Settlage R."/>
            <person name="Preston D."/>
            <person name="Adams L.G."/>
            <person name="Garner H.R."/>
        </authorList>
    </citation>
    <scope>NUCLEOTIDE SEQUENCE [LARGE SCALE GENOMIC DNA]</scope>
    <source>
        <strain>1330</strain>
    </source>
</reference>
<comment type="function">
    <text evidence="1">Aspartyl-tRNA synthetase with relaxed tRNA specificity since it is able to aspartylate not only its cognate tRNA(Asp) but also tRNA(Asn). Reaction proceeds in two steps: L-aspartate is first activated by ATP to form Asp-AMP and then transferred to the acceptor end of tRNA(Asp/Asn).</text>
</comment>
<comment type="catalytic activity">
    <reaction evidence="1">
        <text>tRNA(Asx) + L-aspartate + ATP = L-aspartyl-tRNA(Asx) + AMP + diphosphate</text>
        <dbReference type="Rhea" id="RHEA:18349"/>
        <dbReference type="Rhea" id="RHEA-COMP:9710"/>
        <dbReference type="Rhea" id="RHEA-COMP:9711"/>
        <dbReference type="ChEBI" id="CHEBI:29991"/>
        <dbReference type="ChEBI" id="CHEBI:30616"/>
        <dbReference type="ChEBI" id="CHEBI:33019"/>
        <dbReference type="ChEBI" id="CHEBI:78442"/>
        <dbReference type="ChEBI" id="CHEBI:78516"/>
        <dbReference type="ChEBI" id="CHEBI:456215"/>
        <dbReference type="EC" id="6.1.1.23"/>
    </reaction>
</comment>
<comment type="subunit">
    <text evidence="1">Homodimer.</text>
</comment>
<comment type="subcellular location">
    <subcellularLocation>
        <location evidence="1">Cytoplasm</location>
    </subcellularLocation>
</comment>
<comment type="similarity">
    <text evidence="1">Belongs to the class-II aminoacyl-tRNA synthetase family. Type 1 subfamily.</text>
</comment>
<name>SYDND_BRUSU</name>
<protein>
    <recommendedName>
        <fullName evidence="1">Aspartate--tRNA(Asp/Asn) ligase</fullName>
        <ecNumber evidence="1">6.1.1.23</ecNumber>
    </recommendedName>
    <alternativeName>
        <fullName evidence="1">Aspartyl-tRNA synthetase</fullName>
        <shortName evidence="1">AspRS</shortName>
    </alternativeName>
    <alternativeName>
        <fullName evidence="1">Non-discriminating aspartyl-tRNA synthetase</fullName>
        <shortName evidence="1">ND-AspRS</shortName>
    </alternativeName>
</protein>
<feature type="chain" id="PRO_0000110842" description="Aspartate--tRNA(Asp/Asn) ligase">
    <location>
        <begin position="1"/>
        <end position="595"/>
    </location>
</feature>
<feature type="region of interest" description="Aspartate" evidence="1">
    <location>
        <begin position="199"/>
        <end position="202"/>
    </location>
</feature>
<feature type="binding site" evidence="1">
    <location>
        <position position="175"/>
    </location>
    <ligand>
        <name>L-aspartate</name>
        <dbReference type="ChEBI" id="CHEBI:29991"/>
    </ligand>
</feature>
<feature type="binding site" evidence="1">
    <location>
        <begin position="221"/>
        <end position="223"/>
    </location>
    <ligand>
        <name>ATP</name>
        <dbReference type="ChEBI" id="CHEBI:30616"/>
    </ligand>
</feature>
<feature type="binding site" evidence="1">
    <location>
        <position position="221"/>
    </location>
    <ligand>
        <name>L-aspartate</name>
        <dbReference type="ChEBI" id="CHEBI:29991"/>
    </ligand>
</feature>
<feature type="binding site" evidence="1">
    <location>
        <position position="454"/>
    </location>
    <ligand>
        <name>L-aspartate</name>
        <dbReference type="ChEBI" id="CHEBI:29991"/>
    </ligand>
</feature>
<feature type="binding site" evidence="1">
    <location>
        <position position="488"/>
    </location>
    <ligand>
        <name>ATP</name>
        <dbReference type="ChEBI" id="CHEBI:30616"/>
    </ligand>
</feature>
<feature type="binding site" evidence="1">
    <location>
        <position position="495"/>
    </location>
    <ligand>
        <name>L-aspartate</name>
        <dbReference type="ChEBI" id="CHEBI:29991"/>
    </ligand>
</feature>
<feature type="binding site" evidence="1">
    <location>
        <begin position="540"/>
        <end position="543"/>
    </location>
    <ligand>
        <name>ATP</name>
        <dbReference type="ChEBI" id="CHEBI:30616"/>
    </ligand>
</feature>
<feature type="site" description="Important for tRNA non-discrimination" evidence="1">
    <location>
        <position position="33"/>
    </location>
</feature>
<dbReference type="EC" id="6.1.1.23" evidence="1"/>
<dbReference type="EMBL" id="AE014291">
    <property type="protein sequence ID" value="AAN29680.1"/>
    <property type="molecule type" value="Genomic_DNA"/>
</dbReference>
<dbReference type="EMBL" id="CP002997">
    <property type="protein sequence ID" value="AEM18097.1"/>
    <property type="molecule type" value="Genomic_DNA"/>
</dbReference>
<dbReference type="RefSeq" id="WP_004683546.1">
    <property type="nucleotide sequence ID" value="NZ_KN046804.1"/>
</dbReference>
<dbReference type="SMR" id="P67013"/>
<dbReference type="GeneID" id="97533935"/>
<dbReference type="KEGG" id="bms:BR0751"/>
<dbReference type="KEGG" id="bsi:BS1330_I0747"/>
<dbReference type="PATRIC" id="fig|204722.21.peg.2630"/>
<dbReference type="HOGENOM" id="CLU_014330_3_2_5"/>
<dbReference type="PhylomeDB" id="P67013"/>
<dbReference type="Proteomes" id="UP000007104">
    <property type="component" value="Chromosome I"/>
</dbReference>
<dbReference type="GO" id="GO:0005737">
    <property type="term" value="C:cytoplasm"/>
    <property type="evidence" value="ECO:0007669"/>
    <property type="project" value="UniProtKB-SubCell"/>
</dbReference>
<dbReference type="GO" id="GO:0004815">
    <property type="term" value="F:aspartate-tRNA ligase activity"/>
    <property type="evidence" value="ECO:0007669"/>
    <property type="project" value="UniProtKB-UniRule"/>
</dbReference>
<dbReference type="GO" id="GO:0050560">
    <property type="term" value="F:aspartate-tRNA(Asn) ligase activity"/>
    <property type="evidence" value="ECO:0007669"/>
    <property type="project" value="UniProtKB-EC"/>
</dbReference>
<dbReference type="GO" id="GO:0005524">
    <property type="term" value="F:ATP binding"/>
    <property type="evidence" value="ECO:0007669"/>
    <property type="project" value="UniProtKB-UniRule"/>
</dbReference>
<dbReference type="GO" id="GO:0003676">
    <property type="term" value="F:nucleic acid binding"/>
    <property type="evidence" value="ECO:0007669"/>
    <property type="project" value="InterPro"/>
</dbReference>
<dbReference type="GO" id="GO:0006422">
    <property type="term" value="P:aspartyl-tRNA aminoacylation"/>
    <property type="evidence" value="ECO:0007669"/>
    <property type="project" value="UniProtKB-UniRule"/>
</dbReference>
<dbReference type="CDD" id="cd00777">
    <property type="entry name" value="AspRS_core"/>
    <property type="match status" value="1"/>
</dbReference>
<dbReference type="CDD" id="cd04317">
    <property type="entry name" value="EcAspRS_like_N"/>
    <property type="match status" value="1"/>
</dbReference>
<dbReference type="Gene3D" id="3.30.930.10">
    <property type="entry name" value="Bira Bifunctional Protein, Domain 2"/>
    <property type="match status" value="1"/>
</dbReference>
<dbReference type="Gene3D" id="3.30.1360.30">
    <property type="entry name" value="GAD-like domain"/>
    <property type="match status" value="1"/>
</dbReference>
<dbReference type="Gene3D" id="2.40.50.140">
    <property type="entry name" value="Nucleic acid-binding proteins"/>
    <property type="match status" value="1"/>
</dbReference>
<dbReference type="HAMAP" id="MF_00044">
    <property type="entry name" value="Asp_tRNA_synth_type1"/>
    <property type="match status" value="1"/>
</dbReference>
<dbReference type="InterPro" id="IPR004364">
    <property type="entry name" value="Aa-tRNA-synt_II"/>
</dbReference>
<dbReference type="InterPro" id="IPR006195">
    <property type="entry name" value="aa-tRNA-synth_II"/>
</dbReference>
<dbReference type="InterPro" id="IPR045864">
    <property type="entry name" value="aa-tRNA-synth_II/BPL/LPL"/>
</dbReference>
<dbReference type="InterPro" id="IPR004524">
    <property type="entry name" value="Asp-tRNA-ligase_1"/>
</dbReference>
<dbReference type="InterPro" id="IPR047089">
    <property type="entry name" value="Asp-tRNA-ligase_1_N"/>
</dbReference>
<dbReference type="InterPro" id="IPR002312">
    <property type="entry name" value="Asp/Asn-tRNA-synth_IIb"/>
</dbReference>
<dbReference type="InterPro" id="IPR047090">
    <property type="entry name" value="AspRS_core"/>
</dbReference>
<dbReference type="InterPro" id="IPR004115">
    <property type="entry name" value="GAD-like_sf"/>
</dbReference>
<dbReference type="InterPro" id="IPR029351">
    <property type="entry name" value="GAD_dom"/>
</dbReference>
<dbReference type="InterPro" id="IPR012340">
    <property type="entry name" value="NA-bd_OB-fold"/>
</dbReference>
<dbReference type="InterPro" id="IPR004365">
    <property type="entry name" value="NA-bd_OB_tRNA"/>
</dbReference>
<dbReference type="NCBIfam" id="TIGR00459">
    <property type="entry name" value="aspS_bact"/>
    <property type="match status" value="1"/>
</dbReference>
<dbReference type="NCBIfam" id="NF001750">
    <property type="entry name" value="PRK00476.1"/>
    <property type="match status" value="1"/>
</dbReference>
<dbReference type="PANTHER" id="PTHR22594:SF5">
    <property type="entry name" value="ASPARTATE--TRNA LIGASE, MITOCHONDRIAL"/>
    <property type="match status" value="1"/>
</dbReference>
<dbReference type="PANTHER" id="PTHR22594">
    <property type="entry name" value="ASPARTYL/LYSYL-TRNA SYNTHETASE"/>
    <property type="match status" value="1"/>
</dbReference>
<dbReference type="Pfam" id="PF02938">
    <property type="entry name" value="GAD"/>
    <property type="match status" value="1"/>
</dbReference>
<dbReference type="Pfam" id="PF00152">
    <property type="entry name" value="tRNA-synt_2"/>
    <property type="match status" value="1"/>
</dbReference>
<dbReference type="Pfam" id="PF01336">
    <property type="entry name" value="tRNA_anti-codon"/>
    <property type="match status" value="1"/>
</dbReference>
<dbReference type="PRINTS" id="PR01042">
    <property type="entry name" value="TRNASYNTHASP"/>
</dbReference>
<dbReference type="SUPFAM" id="SSF55681">
    <property type="entry name" value="Class II aaRS and biotin synthetases"/>
    <property type="match status" value="1"/>
</dbReference>
<dbReference type="SUPFAM" id="SSF55261">
    <property type="entry name" value="GAD domain-like"/>
    <property type="match status" value="1"/>
</dbReference>
<dbReference type="SUPFAM" id="SSF50249">
    <property type="entry name" value="Nucleic acid-binding proteins"/>
    <property type="match status" value="1"/>
</dbReference>
<dbReference type="PROSITE" id="PS50862">
    <property type="entry name" value="AA_TRNA_LIGASE_II"/>
    <property type="match status" value="1"/>
</dbReference>